<dbReference type="EC" id="7.4.2.11" evidence="1"/>
<dbReference type="EMBL" id="CP000056">
    <property type="protein sequence ID" value="AAX71378.1"/>
    <property type="molecule type" value="Genomic_DNA"/>
</dbReference>
<dbReference type="RefSeq" id="WP_002985970.1">
    <property type="nucleotide sequence ID" value="NC_007296.2"/>
</dbReference>
<dbReference type="SMR" id="Q48V78"/>
<dbReference type="KEGG" id="spb:M28_Spy0264"/>
<dbReference type="HOGENOM" id="CLU_000604_1_3_9"/>
<dbReference type="GO" id="GO:0005886">
    <property type="term" value="C:plasma membrane"/>
    <property type="evidence" value="ECO:0007669"/>
    <property type="project" value="UniProtKB-SubCell"/>
</dbReference>
<dbReference type="GO" id="GO:0033232">
    <property type="term" value="F:ABC-type D-methionine transporter activity"/>
    <property type="evidence" value="ECO:0007669"/>
    <property type="project" value="UniProtKB-EC"/>
</dbReference>
<dbReference type="GO" id="GO:0005524">
    <property type="term" value="F:ATP binding"/>
    <property type="evidence" value="ECO:0007669"/>
    <property type="project" value="UniProtKB-KW"/>
</dbReference>
<dbReference type="GO" id="GO:0016887">
    <property type="term" value="F:ATP hydrolysis activity"/>
    <property type="evidence" value="ECO:0007669"/>
    <property type="project" value="InterPro"/>
</dbReference>
<dbReference type="CDD" id="cd03258">
    <property type="entry name" value="ABC_MetN_methionine_transporter"/>
    <property type="match status" value="1"/>
</dbReference>
<dbReference type="Gene3D" id="3.30.70.260">
    <property type="match status" value="1"/>
</dbReference>
<dbReference type="Gene3D" id="3.40.50.300">
    <property type="entry name" value="P-loop containing nucleotide triphosphate hydrolases"/>
    <property type="match status" value="1"/>
</dbReference>
<dbReference type="InterPro" id="IPR003593">
    <property type="entry name" value="AAA+_ATPase"/>
</dbReference>
<dbReference type="InterPro" id="IPR003439">
    <property type="entry name" value="ABC_transporter-like_ATP-bd"/>
</dbReference>
<dbReference type="InterPro" id="IPR017871">
    <property type="entry name" value="ABC_transporter-like_CS"/>
</dbReference>
<dbReference type="InterPro" id="IPR045865">
    <property type="entry name" value="ACT-like_dom_sf"/>
</dbReference>
<dbReference type="InterPro" id="IPR041701">
    <property type="entry name" value="MetN_ABC"/>
</dbReference>
<dbReference type="InterPro" id="IPR050086">
    <property type="entry name" value="MetN_ABC_transporter-like"/>
</dbReference>
<dbReference type="InterPro" id="IPR018449">
    <property type="entry name" value="NIL_domain"/>
</dbReference>
<dbReference type="InterPro" id="IPR027417">
    <property type="entry name" value="P-loop_NTPase"/>
</dbReference>
<dbReference type="PANTHER" id="PTHR43166">
    <property type="entry name" value="AMINO ACID IMPORT ATP-BINDING PROTEIN"/>
    <property type="match status" value="1"/>
</dbReference>
<dbReference type="PANTHER" id="PTHR43166:SF30">
    <property type="entry name" value="METHIONINE IMPORT ATP-BINDING PROTEIN METN"/>
    <property type="match status" value="1"/>
</dbReference>
<dbReference type="Pfam" id="PF00005">
    <property type="entry name" value="ABC_tran"/>
    <property type="match status" value="1"/>
</dbReference>
<dbReference type="Pfam" id="PF09383">
    <property type="entry name" value="NIL"/>
    <property type="match status" value="1"/>
</dbReference>
<dbReference type="SMART" id="SM00382">
    <property type="entry name" value="AAA"/>
    <property type="match status" value="1"/>
</dbReference>
<dbReference type="SMART" id="SM00930">
    <property type="entry name" value="NIL"/>
    <property type="match status" value="1"/>
</dbReference>
<dbReference type="SUPFAM" id="SSF55021">
    <property type="entry name" value="ACT-like"/>
    <property type="match status" value="1"/>
</dbReference>
<dbReference type="SUPFAM" id="SSF52540">
    <property type="entry name" value="P-loop containing nucleoside triphosphate hydrolases"/>
    <property type="match status" value="1"/>
</dbReference>
<dbReference type="PROSITE" id="PS00211">
    <property type="entry name" value="ABC_TRANSPORTER_1"/>
    <property type="match status" value="1"/>
</dbReference>
<dbReference type="PROSITE" id="PS50893">
    <property type="entry name" value="ABC_TRANSPORTER_2"/>
    <property type="match status" value="1"/>
</dbReference>
<dbReference type="PROSITE" id="PS51264">
    <property type="entry name" value="METN"/>
    <property type="match status" value="1"/>
</dbReference>
<organism>
    <name type="scientific">Streptococcus pyogenes serotype M28 (strain MGAS6180)</name>
    <dbReference type="NCBI Taxonomy" id="319701"/>
    <lineage>
        <taxon>Bacteria</taxon>
        <taxon>Bacillati</taxon>
        <taxon>Bacillota</taxon>
        <taxon>Bacilli</taxon>
        <taxon>Lactobacillales</taxon>
        <taxon>Streptococcaceae</taxon>
        <taxon>Streptococcus</taxon>
    </lineage>
</organism>
<accession>Q48V78</accession>
<comment type="function">
    <text evidence="1">Part of the ABC transporter complex MetNIQ involved in methionine import. Responsible for energy coupling to the transport system.</text>
</comment>
<comment type="catalytic activity">
    <reaction evidence="1">
        <text>L-methionine(out) + ATP + H2O = L-methionine(in) + ADP + phosphate + H(+)</text>
        <dbReference type="Rhea" id="RHEA:29779"/>
        <dbReference type="ChEBI" id="CHEBI:15377"/>
        <dbReference type="ChEBI" id="CHEBI:15378"/>
        <dbReference type="ChEBI" id="CHEBI:30616"/>
        <dbReference type="ChEBI" id="CHEBI:43474"/>
        <dbReference type="ChEBI" id="CHEBI:57844"/>
        <dbReference type="ChEBI" id="CHEBI:456216"/>
        <dbReference type="EC" id="7.4.2.11"/>
    </reaction>
</comment>
<comment type="catalytic activity">
    <reaction evidence="1">
        <text>D-methionine(out) + ATP + H2O = D-methionine(in) + ADP + phosphate + H(+)</text>
        <dbReference type="Rhea" id="RHEA:29767"/>
        <dbReference type="ChEBI" id="CHEBI:15377"/>
        <dbReference type="ChEBI" id="CHEBI:15378"/>
        <dbReference type="ChEBI" id="CHEBI:30616"/>
        <dbReference type="ChEBI" id="CHEBI:43474"/>
        <dbReference type="ChEBI" id="CHEBI:57932"/>
        <dbReference type="ChEBI" id="CHEBI:456216"/>
        <dbReference type="EC" id="7.4.2.11"/>
    </reaction>
</comment>
<comment type="subunit">
    <text evidence="1">The complex is composed of two ATP-binding proteins (MetN), two transmembrane proteins (MetI) and a solute-binding protein (MetQ).</text>
</comment>
<comment type="subcellular location">
    <subcellularLocation>
        <location evidence="1">Cell membrane</location>
        <topology evidence="1">Peripheral membrane protein</topology>
    </subcellularLocation>
</comment>
<comment type="similarity">
    <text evidence="1">Belongs to the ABC transporter superfamily. Methionine importer (TC 3.A.1.24) family.</text>
</comment>
<sequence length="354" mass="38923">MNEAIIQLDHIDITFRQKKRVIEAVKDVTVHINQGDIYGIVGYSGAGKSTLVRVINLLQAPTNGKITVDGDVTFDQGKIQLSADALRQKRRDIGMIFQHFNLMAQKTAKENVAFALRHSSLSKTEKEHKVIELLELVGLSERADNYPAQLSGGQKQRVAIARALANDPKILISDEATSALDPKTTKQILALLQELNRKLGLTIVMITHEMQIVKDICNRVAVMQNGVLIEEGSVLDIFSNPKEALTQEFITTATGIDEALEKINQQDIVKHLPANALLAQLKYAGTSTDEPLLNSIYRQFEVTANILYGNIEILDHIPVGDMIVVLEGQAENILAAEKALHEAGVDVSILKRGA</sequence>
<proteinExistence type="inferred from homology"/>
<feature type="chain" id="PRO_0000270422" description="Methionine import ATP-binding protein MetN">
    <location>
        <begin position="1"/>
        <end position="354"/>
    </location>
</feature>
<feature type="domain" description="ABC transporter" evidence="1">
    <location>
        <begin position="8"/>
        <end position="250"/>
    </location>
</feature>
<feature type="binding site" evidence="1">
    <location>
        <begin position="42"/>
        <end position="49"/>
    </location>
    <ligand>
        <name>ATP</name>
        <dbReference type="ChEBI" id="CHEBI:30616"/>
    </ligand>
</feature>
<keyword id="KW-0029">Amino-acid transport</keyword>
<keyword id="KW-0067">ATP-binding</keyword>
<keyword id="KW-1003">Cell membrane</keyword>
<keyword id="KW-0472">Membrane</keyword>
<keyword id="KW-0547">Nucleotide-binding</keyword>
<keyword id="KW-1278">Translocase</keyword>
<keyword id="KW-0813">Transport</keyword>
<gene>
    <name evidence="1" type="primary">metN</name>
    <name type="ordered locus">M28_Spy0264</name>
</gene>
<protein>
    <recommendedName>
        <fullName evidence="1">Methionine import ATP-binding protein MetN</fullName>
        <ecNumber evidence="1">7.4.2.11</ecNumber>
    </recommendedName>
</protein>
<evidence type="ECO:0000255" key="1">
    <source>
        <dbReference type="HAMAP-Rule" id="MF_01719"/>
    </source>
</evidence>
<reference key="1">
    <citation type="journal article" date="2005" name="J. Infect. Dis.">
        <title>Genome sequence of a serotype M28 strain of group A Streptococcus: potential new insights into puerperal sepsis and bacterial disease specificity.</title>
        <authorList>
            <person name="Green N.M."/>
            <person name="Zhang S."/>
            <person name="Porcella S.F."/>
            <person name="Nagiec M.J."/>
            <person name="Barbian K.D."/>
            <person name="Beres S.B."/>
            <person name="Lefebvre R.B."/>
            <person name="Musser J.M."/>
        </authorList>
    </citation>
    <scope>NUCLEOTIDE SEQUENCE [LARGE SCALE GENOMIC DNA]</scope>
    <source>
        <strain>MGAS6180</strain>
    </source>
</reference>
<name>METN_STRPM</name>